<evidence type="ECO:0000250" key="1">
    <source>
        <dbReference type="UniProtKB" id="Q96242"/>
    </source>
</evidence>
<evidence type="ECO:0000255" key="2"/>
<evidence type="ECO:0000269" key="3">
    <source>
    </source>
</evidence>
<evidence type="ECO:0000269" key="4">
    <source>
    </source>
</evidence>
<evidence type="ECO:0000269" key="5">
    <source>
    </source>
</evidence>
<evidence type="ECO:0000269" key="6">
    <source>
    </source>
</evidence>
<evidence type="ECO:0000303" key="7">
    <source>
    </source>
</evidence>
<evidence type="ECO:0000305" key="8"/>
<evidence type="ECO:0000305" key="9">
    <source>
    </source>
</evidence>
<sequence>MIMSNLWILTLISTILAVFAAVLIIFRRRISASTTEWPVGPKTLPIIGNLHILGGTALHVVLHKLAEVYGSVMTIWIGSWKPVIIVSDFDRAWEVLVNKSSDYSAREMPEITKIGTANWRTISSSDSGPFWATLRKGLQSVALSPQHLASQTAHQERDIIKLIKNLKDEAALNSGMVKPLDHLKKATVRLISRLIYGQDFDDDKYVEDMHDVIEFLIRISGYAQLAEVFYYAKYLPSHKRAVTGAEEAKRRVIALVRPFLQSNPATNTYLHFLKSQLYPEEVIIFAIFEAYLLGVDSTSSTTAWALAFLIREPSVQEKLYQELKNFTANNNRTMLKVEDVNKLPYLQAVVKETMRMKPIAPLAIPHKACKDTSLMGKKVDKGTKVMVNIHALHHTEKVWKEPYKFMPERFLQKHDKAMEQSLLPFSAGMRICAGMELGKLQFSFSLANLVNAFKWSCVSDGVLPDMSDLLGFVLFMKTPLEARIVPRL</sequence>
<gene>
    <name evidence="7" type="primary">CYP719A21</name>
</gene>
<keyword id="KW-0017">Alkaloid metabolism</keyword>
<keyword id="KW-0349">Heme</keyword>
<keyword id="KW-0408">Iron</keyword>
<keyword id="KW-0472">Membrane</keyword>
<keyword id="KW-0479">Metal-binding</keyword>
<keyword id="KW-0503">Monooxygenase</keyword>
<keyword id="KW-0560">Oxidoreductase</keyword>
<keyword id="KW-0812">Transmembrane</keyword>
<keyword id="KW-1133">Transmembrane helix</keyword>
<protein>
    <recommendedName>
        <fullName evidence="8">(S)-canadine synthase CYP719A21</fullName>
        <ecNumber evidence="3">1.14.19.68</ecNumber>
    </recommendedName>
    <alternativeName>
        <fullName evidence="7">Cytochrome P450 719A21</fullName>
    </alternativeName>
</protein>
<accession>I3QBP4</accession>
<accession>I3PLQ9</accession>
<proteinExistence type="evidence at protein level"/>
<feature type="chain" id="PRO_0000447599" description="(S)-canadine synthase CYP719A21">
    <location>
        <begin position="1"/>
        <end position="488"/>
    </location>
</feature>
<feature type="transmembrane region" description="Helical" evidence="2">
    <location>
        <begin position="6"/>
        <end position="26"/>
    </location>
</feature>
<feature type="binding site" description="axial binding residue" evidence="1">
    <location>
        <position position="432"/>
    </location>
    <ligand>
        <name>heme</name>
        <dbReference type="ChEBI" id="CHEBI:30413"/>
    </ligand>
    <ligandPart>
        <name>Fe</name>
        <dbReference type="ChEBI" id="CHEBI:18248"/>
    </ligandPart>
</feature>
<feature type="sequence conflict" description="In Ref. 2; AFB74615." evidence="8" ref="2">
    <location>
        <begin position="172"/>
        <end position="173"/>
    </location>
</feature>
<feature type="sequence conflict" description="In Ref. 2; AFB74615." evidence="8" ref="2">
    <original>S</original>
    <variation>G</variation>
    <location>
        <position position="237"/>
    </location>
</feature>
<feature type="sequence conflict" description="In Ref. 2; AFB74615." evidence="8" ref="2">
    <original>M</original>
    <variation>I</variation>
    <location>
        <position position="406"/>
    </location>
</feature>
<reference key="1">
    <citation type="journal article" date="2012" name="Plant Mol. Biol.">
        <title>Integration of deep transcript and targeted metabolite profiles for eight cultivars of opium poppy.</title>
        <authorList>
            <person name="Desgagne-Penix I."/>
            <person name="Farrow S.C."/>
            <person name="Cram D."/>
            <person name="Nowak J."/>
            <person name="Facchini P.J."/>
        </authorList>
    </citation>
    <scope>NUCLEOTIDE SEQUENCE [MRNA]</scope>
</reference>
<reference key="2">
    <citation type="journal article" date="2012" name="Science">
        <title>A Papaver somniferum 10-gene cluster for synthesis of the anticancer alkaloid noscapine.</title>
        <authorList>
            <person name="Winzer T."/>
            <person name="Gazda V."/>
            <person name="He Z."/>
            <person name="Kaminski F."/>
            <person name="Kern M."/>
            <person name="Larson T.R."/>
            <person name="Li Y."/>
            <person name="Meade F."/>
            <person name="Teodor R."/>
            <person name="Vaistij F.E."/>
            <person name="Walker C."/>
            <person name="Bowser T.A."/>
            <person name="Graham I.A."/>
        </authorList>
    </citation>
    <scope>NUCLEOTIDE SEQUENCE [GENOMIC DNA]</scope>
</reference>
<reference key="3">
    <citation type="journal article" date="2014" name="FEBS Lett.">
        <title>Cloning and characterization of canadine synthase involved in noscapine biosynthesis in opium poppy.</title>
        <authorList>
            <person name="Dang T.T."/>
            <person name="Facchini P.J."/>
        </authorList>
    </citation>
    <scope>FUNCTION</scope>
    <scope>CATALYTIC ACTIVITY</scope>
    <scope>BIOPHYSICOCHEMICAL PROPERTIES</scope>
</reference>
<reference key="4">
    <citation type="journal article" date="2016" name="Nat. Commun.">
        <title>Engineering biosynthesis of the anticancer alkaloid noscapine in yeast.</title>
        <authorList>
            <person name="Li Y."/>
            <person name="Smolke C.D."/>
        </authorList>
    </citation>
    <scope>FUNCTION</scope>
    <scope>CATALYTIC ACTIVITY</scope>
</reference>
<reference key="5">
    <citation type="journal article" date="2018" name="Proc. Natl. Acad. Sci. U.S.A.">
        <title>Complete biosynthesis of noscapine and halogenated alkaloids in yeast.</title>
        <authorList>
            <person name="Li Y."/>
            <person name="Li S."/>
            <person name="Thodey K."/>
            <person name="Trenchard I."/>
            <person name="Cravens A."/>
            <person name="Smolke C.D."/>
        </authorList>
    </citation>
    <scope>FUNCTION</scope>
</reference>
<name>C7A21_PAPSO</name>
<organism>
    <name type="scientific">Papaver somniferum</name>
    <name type="common">Opium poppy</name>
    <dbReference type="NCBI Taxonomy" id="3469"/>
    <lineage>
        <taxon>Eukaryota</taxon>
        <taxon>Viridiplantae</taxon>
        <taxon>Streptophyta</taxon>
        <taxon>Embryophyta</taxon>
        <taxon>Tracheophyta</taxon>
        <taxon>Spermatophyta</taxon>
        <taxon>Magnoliopsida</taxon>
        <taxon>Ranunculales</taxon>
        <taxon>Papaveraceae</taxon>
        <taxon>Papaveroideae</taxon>
        <taxon>Papaver</taxon>
    </lineage>
</organism>
<dbReference type="EC" id="1.14.19.68" evidence="3"/>
<dbReference type="EMBL" id="JQ045709">
    <property type="protein sequence ID" value="AFI57927.1"/>
    <property type="molecule type" value="mRNA"/>
</dbReference>
<dbReference type="EMBL" id="JQ659003">
    <property type="protein sequence ID" value="AFB74615.1"/>
    <property type="molecule type" value="Genomic_DNA"/>
</dbReference>
<dbReference type="SMR" id="I3QBP4"/>
<dbReference type="GO" id="GO:0016020">
    <property type="term" value="C:membrane"/>
    <property type="evidence" value="ECO:0007669"/>
    <property type="project" value="UniProtKB-SubCell"/>
</dbReference>
<dbReference type="GO" id="GO:0047056">
    <property type="term" value="F:(S)-canadine synthase activity"/>
    <property type="evidence" value="ECO:0007669"/>
    <property type="project" value="UniProtKB-EC"/>
</dbReference>
<dbReference type="GO" id="GO:0020037">
    <property type="term" value="F:heme binding"/>
    <property type="evidence" value="ECO:0007669"/>
    <property type="project" value="InterPro"/>
</dbReference>
<dbReference type="GO" id="GO:0005506">
    <property type="term" value="F:iron ion binding"/>
    <property type="evidence" value="ECO:0007669"/>
    <property type="project" value="InterPro"/>
</dbReference>
<dbReference type="GO" id="GO:0004497">
    <property type="term" value="F:monooxygenase activity"/>
    <property type="evidence" value="ECO:0007669"/>
    <property type="project" value="UniProtKB-KW"/>
</dbReference>
<dbReference type="GO" id="GO:0033075">
    <property type="term" value="P:isoquinoline alkaloid biosynthetic process"/>
    <property type="evidence" value="ECO:0007669"/>
    <property type="project" value="UniProtKB-ARBA"/>
</dbReference>
<dbReference type="Gene3D" id="1.10.630.10">
    <property type="entry name" value="Cytochrome P450"/>
    <property type="match status" value="1"/>
</dbReference>
<dbReference type="InterPro" id="IPR001128">
    <property type="entry name" value="Cyt_P450"/>
</dbReference>
<dbReference type="InterPro" id="IPR017972">
    <property type="entry name" value="Cyt_P450_CS"/>
</dbReference>
<dbReference type="InterPro" id="IPR002401">
    <property type="entry name" value="Cyt_P450_E_grp-I"/>
</dbReference>
<dbReference type="InterPro" id="IPR036396">
    <property type="entry name" value="Cyt_P450_sf"/>
</dbReference>
<dbReference type="PANTHER" id="PTHR47944">
    <property type="entry name" value="CYTOCHROME P450 98A9"/>
    <property type="match status" value="1"/>
</dbReference>
<dbReference type="PANTHER" id="PTHR47944:SF4">
    <property type="entry name" value="OS09G0441700 PROTEIN"/>
    <property type="match status" value="1"/>
</dbReference>
<dbReference type="Pfam" id="PF00067">
    <property type="entry name" value="p450"/>
    <property type="match status" value="1"/>
</dbReference>
<dbReference type="PRINTS" id="PR00463">
    <property type="entry name" value="EP450I"/>
</dbReference>
<dbReference type="PRINTS" id="PR00385">
    <property type="entry name" value="P450"/>
</dbReference>
<dbReference type="SUPFAM" id="SSF48264">
    <property type="entry name" value="Cytochrome P450"/>
    <property type="match status" value="1"/>
</dbReference>
<dbReference type="PROSITE" id="PS00086">
    <property type="entry name" value="CYTOCHROME_P450"/>
    <property type="match status" value="1"/>
</dbReference>
<comment type="function">
    <text evidence="4 5 6">Cytochrome P450 involved in the biosynthesis of the benzylisoquinoline alkaloid noscapine (PubMed:24316226, PubMed:27378283, PubMed:29610307). Converts (S)-tetrahydrocolumbamine to (S)-canadine (PubMed:24316226, PubMed:27378283).</text>
</comment>
<comment type="catalytic activity">
    <reaction evidence="4 5">
        <text>(S)-tetrahydrocolumbamine + reduced [NADPH--hemoprotein reductase] + O2 = (S)-canadine + oxidized [NADPH--hemoprotein reductase] + 2 H2O + H(+)</text>
        <dbReference type="Rhea" id="RHEA:21456"/>
        <dbReference type="Rhea" id="RHEA-COMP:11964"/>
        <dbReference type="Rhea" id="RHEA-COMP:11965"/>
        <dbReference type="ChEBI" id="CHEBI:15377"/>
        <dbReference type="ChEBI" id="CHEBI:15378"/>
        <dbReference type="ChEBI" id="CHEBI:15379"/>
        <dbReference type="ChEBI" id="CHEBI:16592"/>
        <dbReference type="ChEBI" id="CHEBI:17772"/>
        <dbReference type="ChEBI" id="CHEBI:57618"/>
        <dbReference type="ChEBI" id="CHEBI:58210"/>
        <dbReference type="EC" id="1.14.19.68"/>
    </reaction>
    <physiologicalReaction direction="left-to-right" evidence="9">
        <dbReference type="Rhea" id="RHEA:21457"/>
    </physiologicalReaction>
</comment>
<comment type="cofactor">
    <cofactor evidence="1">
        <name>heme</name>
        <dbReference type="ChEBI" id="CHEBI:30413"/>
    </cofactor>
</comment>
<comment type="biophysicochemical properties">
    <kinetics>
        <KM evidence="4">4.63 uM for (S)-tetrahydrocolumbamine</KM>
        <Vmax evidence="4">0.376 pmol/min/mg enzyme with (S)-tetrahydrocolumbamine as substrate</Vmax>
    </kinetics>
</comment>
<comment type="pathway">
    <text evidence="8">Alkaloid biosynthesis.</text>
</comment>
<comment type="subcellular location">
    <subcellularLocation>
        <location evidence="2">Membrane</location>
        <topology evidence="2">Single-pass membrane protein</topology>
    </subcellularLocation>
</comment>
<comment type="similarity">
    <text evidence="8">Belongs to the cytochrome P450 family.</text>
</comment>